<feature type="chain" id="PRO_0000376441" description="Probable cell division protein WhiA">
    <location>
        <begin position="1"/>
        <end position="316"/>
    </location>
</feature>
<feature type="DNA-binding region" description="H-T-H motif" evidence="1">
    <location>
        <begin position="275"/>
        <end position="309"/>
    </location>
</feature>
<organism>
    <name type="scientific">Bacillus pumilus (strain SAFR-032)</name>
    <dbReference type="NCBI Taxonomy" id="315750"/>
    <lineage>
        <taxon>Bacteria</taxon>
        <taxon>Bacillati</taxon>
        <taxon>Bacillota</taxon>
        <taxon>Bacilli</taxon>
        <taxon>Bacillales</taxon>
        <taxon>Bacillaceae</taxon>
        <taxon>Bacillus</taxon>
    </lineage>
</organism>
<evidence type="ECO:0000255" key="1">
    <source>
        <dbReference type="HAMAP-Rule" id="MF_01420"/>
    </source>
</evidence>
<accession>A8FHQ0</accession>
<gene>
    <name evidence="1" type="primary">whiA</name>
    <name type="ordered locus">BPUM_3113</name>
</gene>
<dbReference type="EMBL" id="CP000813">
    <property type="protein sequence ID" value="ABV63767.1"/>
    <property type="molecule type" value="Genomic_DNA"/>
</dbReference>
<dbReference type="RefSeq" id="WP_003213321.1">
    <property type="nucleotide sequence ID" value="NZ_VEIS01000009.1"/>
</dbReference>
<dbReference type="SMR" id="A8FHQ0"/>
<dbReference type="STRING" id="315750.BPUM_3113"/>
<dbReference type="GeneID" id="5622403"/>
<dbReference type="KEGG" id="bpu:BPUM_3113"/>
<dbReference type="eggNOG" id="COG1481">
    <property type="taxonomic scope" value="Bacteria"/>
</dbReference>
<dbReference type="HOGENOM" id="CLU_053282_0_0_9"/>
<dbReference type="OrthoDB" id="401278at2"/>
<dbReference type="Proteomes" id="UP000001355">
    <property type="component" value="Chromosome"/>
</dbReference>
<dbReference type="GO" id="GO:0003677">
    <property type="term" value="F:DNA binding"/>
    <property type="evidence" value="ECO:0007669"/>
    <property type="project" value="UniProtKB-UniRule"/>
</dbReference>
<dbReference type="GO" id="GO:0051301">
    <property type="term" value="P:cell division"/>
    <property type="evidence" value="ECO:0007669"/>
    <property type="project" value="UniProtKB-UniRule"/>
</dbReference>
<dbReference type="GO" id="GO:0043937">
    <property type="term" value="P:regulation of sporulation"/>
    <property type="evidence" value="ECO:0007669"/>
    <property type="project" value="InterPro"/>
</dbReference>
<dbReference type="FunFam" id="3.10.28.10:FF:000002">
    <property type="entry name" value="Probable cell division protein WhiA"/>
    <property type="match status" value="1"/>
</dbReference>
<dbReference type="Gene3D" id="3.10.28.10">
    <property type="entry name" value="Homing endonucleases"/>
    <property type="match status" value="1"/>
</dbReference>
<dbReference type="HAMAP" id="MF_01420">
    <property type="entry name" value="HTH_type_WhiA"/>
    <property type="match status" value="1"/>
</dbReference>
<dbReference type="InterPro" id="IPR027434">
    <property type="entry name" value="Homing_endonucl"/>
</dbReference>
<dbReference type="InterPro" id="IPR018478">
    <property type="entry name" value="Sporu_reg_WhiA_N_dom"/>
</dbReference>
<dbReference type="InterPro" id="IPR003802">
    <property type="entry name" value="Sporulation_regulator_WhiA"/>
</dbReference>
<dbReference type="InterPro" id="IPR023054">
    <property type="entry name" value="Sporulation_regulator_WhiA_C"/>
</dbReference>
<dbReference type="InterPro" id="IPR039518">
    <property type="entry name" value="WhiA_LAGLIDADG_dom"/>
</dbReference>
<dbReference type="NCBIfam" id="TIGR00647">
    <property type="entry name" value="DNA_bind_WhiA"/>
    <property type="match status" value="1"/>
</dbReference>
<dbReference type="PANTHER" id="PTHR37307">
    <property type="entry name" value="CELL DIVISION PROTEIN WHIA-RELATED"/>
    <property type="match status" value="1"/>
</dbReference>
<dbReference type="PANTHER" id="PTHR37307:SF1">
    <property type="entry name" value="CELL DIVISION PROTEIN WHIA-RELATED"/>
    <property type="match status" value="1"/>
</dbReference>
<dbReference type="Pfam" id="PF02650">
    <property type="entry name" value="HTH_WhiA"/>
    <property type="match status" value="1"/>
</dbReference>
<dbReference type="Pfam" id="PF14527">
    <property type="entry name" value="LAGLIDADG_WhiA"/>
    <property type="match status" value="1"/>
</dbReference>
<dbReference type="Pfam" id="PF10298">
    <property type="entry name" value="WhiA_N"/>
    <property type="match status" value="1"/>
</dbReference>
<dbReference type="SUPFAM" id="SSF55608">
    <property type="entry name" value="Homing endonucleases"/>
    <property type="match status" value="1"/>
</dbReference>
<protein>
    <recommendedName>
        <fullName evidence="1">Probable cell division protein WhiA</fullName>
    </recommendedName>
</protein>
<proteinExistence type="inferred from homology"/>
<name>WHIA_BACP2</name>
<sequence>MSFASETKKELTNLDVKDCCTKAELSALIRMNGSLSFSNRKLILDIQTENAAIARRIYTLLKKKYDVTVELLVRKKMRLKKNNVYIVRLVERAKTILEDLKILGEQFVFERNISEELVKKRCCKRSYMRGAFLAGGSVNNPETSSYHLEIFSLYKEHNDALCELMNQFHLNSKTLERKKGYITYMKEAEKITEFLSVVGAHNSLLRFEDVRIVRDMRNSVNRLVNCETANLNKTIGASLRQVENIQFIDEKIGLDALPDKLREIAKLRVDYQEVTLKELGEMVESGKISKSGINHRLRKLDQIAEQLRNGQAVTLK</sequence>
<keyword id="KW-0131">Cell cycle</keyword>
<keyword id="KW-0132">Cell division</keyword>
<keyword id="KW-0238">DNA-binding</keyword>
<reference key="1">
    <citation type="journal article" date="2007" name="PLoS ONE">
        <title>Paradoxical DNA repair and peroxide resistance gene conservation in Bacillus pumilus SAFR-032.</title>
        <authorList>
            <person name="Gioia J."/>
            <person name="Yerrapragada S."/>
            <person name="Qin X."/>
            <person name="Jiang H."/>
            <person name="Igboeli O.C."/>
            <person name="Muzny D."/>
            <person name="Dugan-Rocha S."/>
            <person name="Ding Y."/>
            <person name="Hawes A."/>
            <person name="Liu W."/>
            <person name="Perez L."/>
            <person name="Kovar C."/>
            <person name="Dinh H."/>
            <person name="Lee S."/>
            <person name="Nazareth L."/>
            <person name="Blyth P."/>
            <person name="Holder M."/>
            <person name="Buhay C."/>
            <person name="Tirumalai M.R."/>
            <person name="Liu Y."/>
            <person name="Dasgupta I."/>
            <person name="Bokhetache L."/>
            <person name="Fujita M."/>
            <person name="Karouia F."/>
            <person name="Eswara Moorthy P."/>
            <person name="Siefert J."/>
            <person name="Uzman A."/>
            <person name="Buzumbo P."/>
            <person name="Verma A."/>
            <person name="Zwiya H."/>
            <person name="McWilliams B.D."/>
            <person name="Olowu A."/>
            <person name="Clinkenbeard K.D."/>
            <person name="Newcombe D."/>
            <person name="Golebiewski L."/>
            <person name="Petrosino J.F."/>
            <person name="Nicholson W.L."/>
            <person name="Fox G.E."/>
            <person name="Venkateswaran K."/>
            <person name="Highlander S.K."/>
            <person name="Weinstock G.M."/>
        </authorList>
    </citation>
    <scope>NUCLEOTIDE SEQUENCE [LARGE SCALE GENOMIC DNA]</scope>
    <source>
        <strain>SAFR-032</strain>
    </source>
</reference>
<comment type="function">
    <text evidence="1">Involved in cell division and chromosome segregation.</text>
</comment>
<comment type="similarity">
    <text evidence="1">Belongs to the WhiA family.</text>
</comment>